<protein>
    <recommendedName>
        <fullName evidence="1">Thiamine thiazole synthase 3, chloroplastic</fullName>
        <ecNumber evidence="1">2.4.2.60</ecNumber>
    </recommendedName>
    <alternativeName>
        <fullName evidence="1">Thiazole biosynthetic enzyme 3</fullName>
    </alternativeName>
</protein>
<evidence type="ECO:0000255" key="1">
    <source>
        <dbReference type="HAMAP-Rule" id="MF_03158"/>
    </source>
</evidence>
<dbReference type="EC" id="2.4.2.60" evidence="1"/>
<dbReference type="EMBL" id="DS544899">
    <property type="protein sequence ID" value="EDQ81450.1"/>
    <property type="molecule type" value="Genomic_DNA"/>
</dbReference>
<dbReference type="EMBL" id="DS544899">
    <property type="protein sequence ID" value="EDQ81452.1"/>
    <property type="molecule type" value="Genomic_DNA"/>
</dbReference>
<dbReference type="RefSeq" id="XP_001753698.1">
    <property type="nucleotide sequence ID" value="XM_001753646.1"/>
</dbReference>
<dbReference type="RefSeq" id="XP_001753700.1">
    <property type="nucleotide sequence ID" value="XM_001753648.1"/>
</dbReference>
<dbReference type="SMR" id="A9RHW6"/>
<dbReference type="FunCoup" id="A9RHW6">
    <property type="interactions" value="1183"/>
</dbReference>
<dbReference type="PaxDb" id="3218-PP1S10_341V6.1"/>
<dbReference type="eggNOG" id="KOG2960">
    <property type="taxonomic scope" value="Eukaryota"/>
</dbReference>
<dbReference type="HOGENOM" id="CLU_308926_0_0_1"/>
<dbReference type="InParanoid" id="A9RHW6"/>
<dbReference type="Proteomes" id="UP000006727">
    <property type="component" value="Chromosome 23"/>
</dbReference>
<dbReference type="GO" id="GO:0009570">
    <property type="term" value="C:chloroplast stroma"/>
    <property type="evidence" value="ECO:0007669"/>
    <property type="project" value="UniProtKB-UniRule"/>
</dbReference>
<dbReference type="GO" id="GO:0005829">
    <property type="term" value="C:cytosol"/>
    <property type="evidence" value="ECO:0007669"/>
    <property type="project" value="UniProtKB-UniRule"/>
</dbReference>
<dbReference type="GO" id="GO:0160205">
    <property type="term" value="F:cysteine-dependent adenosine diphosphate thiazole synthase activity"/>
    <property type="evidence" value="ECO:0007669"/>
    <property type="project" value="UniProtKB-EC"/>
</dbReference>
<dbReference type="GO" id="GO:0005506">
    <property type="term" value="F:iron ion binding"/>
    <property type="evidence" value="ECO:0007669"/>
    <property type="project" value="UniProtKB-UniRule"/>
</dbReference>
<dbReference type="GO" id="GO:0009228">
    <property type="term" value="P:thiamine biosynthetic process"/>
    <property type="evidence" value="ECO:0007669"/>
    <property type="project" value="UniProtKB-UniRule"/>
</dbReference>
<dbReference type="GO" id="GO:0052837">
    <property type="term" value="P:thiazole biosynthetic process"/>
    <property type="evidence" value="ECO:0007669"/>
    <property type="project" value="UniProtKB-UniRule"/>
</dbReference>
<dbReference type="FunFam" id="3.50.50.60:FF:000070">
    <property type="entry name" value="Thiamine thiazole synthase, chloroplastic"/>
    <property type="match status" value="1"/>
</dbReference>
<dbReference type="Gene3D" id="6.10.250.2840">
    <property type="match status" value="1"/>
</dbReference>
<dbReference type="Gene3D" id="3.50.50.60">
    <property type="entry name" value="FAD/NAD(P)-binding domain"/>
    <property type="match status" value="1"/>
</dbReference>
<dbReference type="HAMAP" id="MF_03158">
    <property type="entry name" value="THI4"/>
    <property type="match status" value="1"/>
</dbReference>
<dbReference type="InterPro" id="IPR036188">
    <property type="entry name" value="FAD/NAD-bd_sf"/>
</dbReference>
<dbReference type="InterPro" id="IPR027495">
    <property type="entry name" value="Sti35"/>
</dbReference>
<dbReference type="InterPro" id="IPR002922">
    <property type="entry name" value="Thi4_fam"/>
</dbReference>
<dbReference type="NCBIfam" id="TIGR00292">
    <property type="entry name" value="sulfide-dependent adenosine diphosphate thiazole synthase"/>
    <property type="match status" value="1"/>
</dbReference>
<dbReference type="PANTHER" id="PTHR43422">
    <property type="entry name" value="THIAMINE THIAZOLE SYNTHASE"/>
    <property type="match status" value="1"/>
</dbReference>
<dbReference type="PANTHER" id="PTHR43422:SF3">
    <property type="entry name" value="THIAMINE THIAZOLE SYNTHASE"/>
    <property type="match status" value="1"/>
</dbReference>
<dbReference type="Pfam" id="PF01946">
    <property type="entry name" value="Thi4"/>
    <property type="match status" value="1"/>
</dbReference>
<dbReference type="SUPFAM" id="SSF51905">
    <property type="entry name" value="FAD/NAD(P)-binding domain"/>
    <property type="match status" value="1"/>
</dbReference>
<gene>
    <name evidence="1" type="primary">THI1-3</name>
    <name type="ORF">PHYPADRAFT_114476</name>
    <name type="ORF">PHYPADRAFT_114591</name>
</gene>
<organism>
    <name type="scientific">Physcomitrium patens</name>
    <name type="common">Spreading-leaved earth moss</name>
    <name type="synonym">Physcomitrella patens</name>
    <dbReference type="NCBI Taxonomy" id="3218"/>
    <lineage>
        <taxon>Eukaryota</taxon>
        <taxon>Viridiplantae</taxon>
        <taxon>Streptophyta</taxon>
        <taxon>Embryophyta</taxon>
        <taxon>Bryophyta</taxon>
        <taxon>Bryophytina</taxon>
        <taxon>Bryopsida</taxon>
        <taxon>Funariidae</taxon>
        <taxon>Funariales</taxon>
        <taxon>Funariaceae</taxon>
        <taxon>Physcomitrium</taxon>
    </lineage>
</organism>
<accession>A9RHW6</accession>
<name>THI43_PHYPA</name>
<comment type="function">
    <text evidence="1">Involved in biosynthesis of the thiamine precursor thiazole. Catalyzes the conversion of NAD and glycine to adenosine diphosphate 5-(2-hydroxyethyl)-4-methylthiazole-2-carboxylic acid (ADT), an adenylated thiazole intermediate. The reaction includes an iron-dependent sulfide transfer from a conserved cysteine residue of the protein to a thiazole intermediate. The enzyme can only undergo a single turnover, which suggests it is a suicide enzyme. May have additional roles in adaptation to various stress conditions and in DNA damage tolerance.</text>
</comment>
<comment type="catalytic activity">
    <reaction evidence="1">
        <text>[ADP-thiazole synthase]-L-cysteine + glycine + NAD(+) = [ADP-thiazole synthase]-dehydroalanine + ADP-5-ethyl-4-methylthiazole-2-carboxylate + nicotinamide + 3 H2O + 2 H(+)</text>
        <dbReference type="Rhea" id="RHEA:55708"/>
        <dbReference type="Rhea" id="RHEA-COMP:14264"/>
        <dbReference type="Rhea" id="RHEA-COMP:14265"/>
        <dbReference type="ChEBI" id="CHEBI:15377"/>
        <dbReference type="ChEBI" id="CHEBI:15378"/>
        <dbReference type="ChEBI" id="CHEBI:17154"/>
        <dbReference type="ChEBI" id="CHEBI:29950"/>
        <dbReference type="ChEBI" id="CHEBI:57305"/>
        <dbReference type="ChEBI" id="CHEBI:57540"/>
        <dbReference type="ChEBI" id="CHEBI:90873"/>
        <dbReference type="ChEBI" id="CHEBI:139151"/>
        <dbReference type="EC" id="2.4.2.60"/>
    </reaction>
</comment>
<comment type="cofactor">
    <cofactor evidence="1">
        <name>Fe cation</name>
        <dbReference type="ChEBI" id="CHEBI:24875"/>
    </cofactor>
    <text evidence="1">Binds 1 Fe cation per subunit.</text>
</comment>
<comment type="subunit">
    <text evidence="1">Homooctamer.</text>
</comment>
<comment type="subcellular location">
    <subcellularLocation>
        <location evidence="1">Plastid</location>
        <location evidence="1">Chloroplast</location>
    </subcellularLocation>
</comment>
<comment type="PTM">
    <text evidence="1">During the catalytic reaction, a sulfide is transferred from Cys-225 to a reaction intermediate, generating a dehydroalanine residue.</text>
</comment>
<comment type="similarity">
    <text evidence="1">Belongs to the THI4 family.</text>
</comment>
<proteinExistence type="inferred from homology"/>
<feature type="transit peptide" description="Chloroplast" evidence="1">
    <location>
        <begin position="1"/>
        <end position="51"/>
    </location>
</feature>
<feature type="chain" id="PRO_0000415863" description="Thiamine thiazole synthase 3, chloroplastic">
    <location>
        <begin position="52"/>
        <end position="357"/>
    </location>
</feature>
<feature type="binding site" evidence="1">
    <location>
        <position position="103"/>
    </location>
    <ligand>
        <name>substrate</name>
    </ligand>
</feature>
<feature type="binding site" evidence="1">
    <location>
        <begin position="123"/>
        <end position="124"/>
    </location>
    <ligand>
        <name>substrate</name>
    </ligand>
</feature>
<feature type="binding site" evidence="1">
    <location>
        <position position="131"/>
    </location>
    <ligand>
        <name>substrate</name>
    </ligand>
</feature>
<feature type="binding site" evidence="1">
    <location>
        <position position="196"/>
    </location>
    <ligand>
        <name>substrate</name>
    </ligand>
</feature>
<feature type="binding site" evidence="1">
    <location>
        <position position="227"/>
    </location>
    <ligand>
        <name>substrate</name>
    </ligand>
</feature>
<feature type="binding site" evidence="1">
    <location>
        <position position="242"/>
    </location>
    <ligand>
        <name>substrate</name>
    </ligand>
</feature>
<feature type="binding site" evidence="1">
    <location>
        <position position="294"/>
    </location>
    <ligand>
        <name>substrate</name>
    </ligand>
</feature>
<feature type="binding site" evidence="1">
    <location>
        <begin position="304"/>
        <end position="306"/>
    </location>
    <ligand>
        <name>substrate</name>
    </ligand>
</feature>
<feature type="modified residue" description="2,3-didehydroalanine (Cys)" evidence="1">
    <location>
        <position position="225"/>
    </location>
</feature>
<reference key="1">
    <citation type="journal article" date="2008" name="Science">
        <title>The Physcomitrella genome reveals evolutionary insights into the conquest of land by plants.</title>
        <authorList>
            <person name="Rensing S.A."/>
            <person name="Lang D."/>
            <person name="Zimmer A.D."/>
            <person name="Terry A."/>
            <person name="Salamov A."/>
            <person name="Shapiro H."/>
            <person name="Nishiyama T."/>
            <person name="Perroud P.-F."/>
            <person name="Lindquist E.A."/>
            <person name="Kamisugi Y."/>
            <person name="Tanahashi T."/>
            <person name="Sakakibara K."/>
            <person name="Fujita T."/>
            <person name="Oishi K."/>
            <person name="Shin-I T."/>
            <person name="Kuroki Y."/>
            <person name="Toyoda A."/>
            <person name="Suzuki Y."/>
            <person name="Hashimoto S.-I."/>
            <person name="Yamaguchi K."/>
            <person name="Sugano S."/>
            <person name="Kohara Y."/>
            <person name="Fujiyama A."/>
            <person name="Anterola A."/>
            <person name="Aoki S."/>
            <person name="Ashton N."/>
            <person name="Barbazuk W.B."/>
            <person name="Barker E."/>
            <person name="Bennetzen J.L."/>
            <person name="Blankenship R."/>
            <person name="Cho S.H."/>
            <person name="Dutcher S.K."/>
            <person name="Estelle M."/>
            <person name="Fawcett J.A."/>
            <person name="Gundlach H."/>
            <person name="Hanada K."/>
            <person name="Heyl A."/>
            <person name="Hicks K.A."/>
            <person name="Hughes J."/>
            <person name="Lohr M."/>
            <person name="Mayer K."/>
            <person name="Melkozernov A."/>
            <person name="Murata T."/>
            <person name="Nelson D.R."/>
            <person name="Pils B."/>
            <person name="Prigge M."/>
            <person name="Reiss B."/>
            <person name="Renner T."/>
            <person name="Rombauts S."/>
            <person name="Rushton P.J."/>
            <person name="Sanderfoot A."/>
            <person name="Schween G."/>
            <person name="Shiu S.-H."/>
            <person name="Stueber K."/>
            <person name="Theodoulou F.L."/>
            <person name="Tu H."/>
            <person name="Van de Peer Y."/>
            <person name="Verrier P.J."/>
            <person name="Waters E."/>
            <person name="Wood A."/>
            <person name="Yang L."/>
            <person name="Cove D."/>
            <person name="Cuming A.C."/>
            <person name="Hasebe M."/>
            <person name="Lucas S."/>
            <person name="Mishler B.D."/>
            <person name="Reski R."/>
            <person name="Grigoriev I.V."/>
            <person name="Quatrano R.S."/>
            <person name="Boore J.L."/>
        </authorList>
    </citation>
    <scope>NUCLEOTIDE SEQUENCE [LARGE SCALE GENOMIC DNA]</scope>
    <source>
        <strain>cv. Gransden 2004</strain>
    </source>
</reference>
<keyword id="KW-0150">Chloroplast</keyword>
<keyword id="KW-0408">Iron</keyword>
<keyword id="KW-0479">Metal-binding</keyword>
<keyword id="KW-0520">NAD</keyword>
<keyword id="KW-0934">Plastid</keyword>
<keyword id="KW-1185">Reference proteome</keyword>
<keyword id="KW-0784">Thiamine biosynthesis</keyword>
<keyword id="KW-0808">Transferase</keyword>
<keyword id="KW-0809">Transit peptide</keyword>
<sequence length="357" mass="37873">MSISAAGVATGLGANVELKSNVGSSSSSVAGVRLFTSRKAQLRRCAAPATSASLYSDANYDLNNYKFAPIKESIVAREMTRRYMTDMITHADTDVVVVGAGSAGLSCAYELSKNPNVKVAIVEQSVSPGGGAWLGGQLFSAMIVRKPAHRFLDEIEVPYEEMENYVVIKHAALFTSTIMSKLLARPNVKLFNAVAAEDLIIRGDRVSGVVTNWALVAQNHNTQSCMDPNVMEAKVVVSSCGHDGPFGATGVKRLRSIGMIESVPGMKCLDMNAAEDAIVKHTREVVPGMIVTGMEVAEIDGSPRMGPTFGAMMISGQKAAHLALRALGLPNEVDGNYKPNVHPELVLASTDDMTASA</sequence>